<comment type="function">
    <text evidence="7 8">The SMN complex plays an essential role in spliceosomal snRNP assembly in the cytoplasm and is required for pre-mRNA splicing in the nucleus (PubMed:23063131). It may also play a role in the metabolism of snoRNPs (PubMed:23063131). Required in motor neurons and proprioceptive neurons to ensure correct U12 intron splicing and proper levels of tmem41b mRNA (PubMed:23063131). Required for the maturation of motor neuron axonal branches and dendrites (PubMed:23063131, PubMed:29061699).</text>
</comment>
<comment type="subunit">
    <text evidence="3 8">Homodimer. Component of an import snRNP complex composed of kpnb1, rnut1, smn1 and znf259. Part of the core SMN complex that contains smn1, gemin2/sip1, ddx20/gemin3, gemin4, gemin5, gemin6, gemin7, gemin8 and strap/unrip. Interacts with ddx20, fbl, nola1, rnut1, syncrip and with several spliceosomal snRNP core Sm proteins, including snrpb, snrpd1, snrpd2, snrpd3, snrpe and ilf3 (By similarity). Interacts with elavl4 (PubMed:29061699).</text>
</comment>
<comment type="subcellular location">
    <subcellularLocation>
        <location evidence="3">Nucleus</location>
        <location evidence="3">Gem</location>
    </subcellularLocation>
    <subcellularLocation>
        <location evidence="3">Nucleus</location>
        <location evidence="3">Cajal body</location>
    </subcellularLocation>
    <subcellularLocation>
        <location evidence="3">Cytoplasm</location>
    </subcellularLocation>
    <subcellularLocation>
        <location evidence="3">Cytoplasmic granule</location>
    </subcellularLocation>
    <subcellularLocation>
        <location evidence="3">Perikaryon</location>
    </subcellularLocation>
    <subcellularLocation>
        <location evidence="3">Cell projection</location>
        <location evidence="3">Neuron projection</location>
    </subcellularLocation>
    <subcellularLocation>
        <location evidence="2">Cytoplasm</location>
        <location evidence="2">Myofibril</location>
        <location evidence="2">Sarcomere</location>
        <location evidence="2">Z line</location>
    </subcellularLocation>
</comment>
<comment type="domain">
    <text evidence="1">The Tudor domain mediates association with dimethylarginines, which are common in snRNP proteins.</text>
</comment>
<comment type="disruption phenotype">
    <text evidence="7 8">Decreased axonal branches and decreased dendrites in motor neurons (PubMed:29061699). Decreased GAP43 mRNA levels (PubMed:29061699). Morpholino knockdown of the protein causes severe defects in motor neuron axonal outgrowth, including truncations and abnormal branching (PubMed:23063131).</text>
</comment>
<comment type="similarity">
    <text evidence="9">Belongs to the SMN family.</text>
</comment>
<protein>
    <recommendedName>
        <fullName>Survival motor neuron protein 1</fullName>
    </recommendedName>
</protein>
<dbReference type="EMBL" id="Y17256">
    <property type="protein sequence ID" value="CAB41938.1"/>
    <property type="molecule type" value="mRNA"/>
</dbReference>
<dbReference type="RefSeq" id="NP_571266.1">
    <property type="nucleotide sequence ID" value="NM_131191.1"/>
</dbReference>
<dbReference type="SMR" id="Q9W6S8"/>
<dbReference type="FunCoup" id="Q9W6S8">
    <property type="interactions" value="1036"/>
</dbReference>
<dbReference type="STRING" id="7955.ENSDARP00000017636"/>
<dbReference type="iPTMnet" id="Q9W6S8"/>
<dbReference type="PaxDb" id="7955-ENSDARP00000017636"/>
<dbReference type="Ensembl" id="ENSDART00000028099">
    <property type="protein sequence ID" value="ENSDARP00000017636"/>
    <property type="gene ID" value="ENSDARG00000018494"/>
</dbReference>
<dbReference type="GeneID" id="30432"/>
<dbReference type="KEGG" id="dre:30432"/>
<dbReference type="AGR" id="ZFIN:ZDB-GENE-990715-16"/>
<dbReference type="CTD" id="6606"/>
<dbReference type="ZFIN" id="ZDB-GENE-990715-16">
    <property type="gene designation" value="smn1"/>
</dbReference>
<dbReference type="eggNOG" id="KOG4327">
    <property type="taxonomic scope" value="Eukaryota"/>
</dbReference>
<dbReference type="HOGENOM" id="CLU_077852_0_0_1"/>
<dbReference type="InParanoid" id="Q9W6S8"/>
<dbReference type="OMA" id="DETVNGM"/>
<dbReference type="OrthoDB" id="197400at2759"/>
<dbReference type="PhylomeDB" id="Q9W6S8"/>
<dbReference type="TreeFam" id="TF318390"/>
<dbReference type="PRO" id="PR:Q9W6S8"/>
<dbReference type="Proteomes" id="UP000000437">
    <property type="component" value="Chromosome 5"/>
</dbReference>
<dbReference type="Bgee" id="ENSDARG00000018494">
    <property type="expression patterns" value="Expressed in ovary and 29 other cell types or tissues"/>
</dbReference>
<dbReference type="ExpressionAtlas" id="Q9W6S8">
    <property type="expression patterns" value="baseline"/>
</dbReference>
<dbReference type="GO" id="GO:0015030">
    <property type="term" value="C:Cajal body"/>
    <property type="evidence" value="ECO:0000250"/>
    <property type="project" value="UniProtKB"/>
</dbReference>
<dbReference type="GO" id="GO:0005737">
    <property type="term" value="C:cytoplasm"/>
    <property type="evidence" value="ECO:0000250"/>
    <property type="project" value="UniProtKB"/>
</dbReference>
<dbReference type="GO" id="GO:0036464">
    <property type="term" value="C:cytoplasmic ribonucleoprotein granule"/>
    <property type="evidence" value="ECO:0000250"/>
    <property type="project" value="UniProtKB"/>
</dbReference>
<dbReference type="GO" id="GO:0097504">
    <property type="term" value="C:Gemini of Cajal bodies"/>
    <property type="evidence" value="ECO:0000250"/>
    <property type="project" value="UniProtKB"/>
</dbReference>
<dbReference type="GO" id="GO:0043005">
    <property type="term" value="C:neuron projection"/>
    <property type="evidence" value="ECO:0000250"/>
    <property type="project" value="UniProtKB"/>
</dbReference>
<dbReference type="GO" id="GO:0005654">
    <property type="term" value="C:nucleoplasm"/>
    <property type="evidence" value="ECO:0000250"/>
    <property type="project" value="UniProtKB"/>
</dbReference>
<dbReference type="GO" id="GO:0005634">
    <property type="term" value="C:nucleus"/>
    <property type="evidence" value="ECO:0000250"/>
    <property type="project" value="UniProtKB"/>
</dbReference>
<dbReference type="GO" id="GO:0043204">
    <property type="term" value="C:perikaryon"/>
    <property type="evidence" value="ECO:0000250"/>
    <property type="project" value="UniProtKB"/>
</dbReference>
<dbReference type="GO" id="GO:0032991">
    <property type="term" value="C:protein-containing complex"/>
    <property type="evidence" value="ECO:0000353"/>
    <property type="project" value="ZFIN"/>
</dbReference>
<dbReference type="GO" id="GO:0032797">
    <property type="term" value="C:SMN complex"/>
    <property type="evidence" value="ECO:0000250"/>
    <property type="project" value="UniProtKB"/>
</dbReference>
<dbReference type="GO" id="GO:0005681">
    <property type="term" value="C:spliceosomal complex"/>
    <property type="evidence" value="ECO:0007669"/>
    <property type="project" value="UniProtKB-KW"/>
</dbReference>
<dbReference type="GO" id="GO:0030018">
    <property type="term" value="C:Z disc"/>
    <property type="evidence" value="ECO:0007669"/>
    <property type="project" value="UniProtKB-SubCell"/>
</dbReference>
<dbReference type="GO" id="GO:0003723">
    <property type="term" value="F:RNA binding"/>
    <property type="evidence" value="ECO:0007669"/>
    <property type="project" value="UniProtKB-KW"/>
</dbReference>
<dbReference type="GO" id="GO:0140060">
    <property type="term" value="P:axon arborization"/>
    <property type="evidence" value="ECO:0000315"/>
    <property type="project" value="ZFIN"/>
</dbReference>
<dbReference type="GO" id="GO:0061564">
    <property type="term" value="P:axon development"/>
    <property type="evidence" value="ECO:0000315"/>
    <property type="project" value="ZFIN"/>
</dbReference>
<dbReference type="GO" id="GO:0048675">
    <property type="term" value="P:axon extension"/>
    <property type="evidence" value="ECO:0000315"/>
    <property type="project" value="ZFIN"/>
</dbReference>
<dbReference type="GO" id="GO:0007409">
    <property type="term" value="P:axonogenesis"/>
    <property type="evidence" value="ECO:0000315"/>
    <property type="project" value="ZFIN"/>
</dbReference>
<dbReference type="GO" id="GO:0016358">
    <property type="term" value="P:dendrite development"/>
    <property type="evidence" value="ECO:0000315"/>
    <property type="project" value="ZFIN"/>
</dbReference>
<dbReference type="GO" id="GO:0008045">
    <property type="term" value="P:motor neuron axon guidance"/>
    <property type="evidence" value="ECO:0000315"/>
    <property type="project" value="ZFIN"/>
</dbReference>
<dbReference type="GO" id="GO:0000398">
    <property type="term" value="P:mRNA splicing, via spliceosome"/>
    <property type="evidence" value="ECO:0000315"/>
    <property type="project" value="ZFIN"/>
</dbReference>
<dbReference type="GO" id="GO:0070657">
    <property type="term" value="P:neuromast regeneration"/>
    <property type="evidence" value="ECO:0000315"/>
    <property type="project" value="ZFIN"/>
</dbReference>
<dbReference type="GO" id="GO:0007528">
    <property type="term" value="P:neuromuscular junction development"/>
    <property type="evidence" value="ECO:0000315"/>
    <property type="project" value="ZFIN"/>
</dbReference>
<dbReference type="GO" id="GO:0070050">
    <property type="term" value="P:neuron cellular homeostasis"/>
    <property type="evidence" value="ECO:0000315"/>
    <property type="project" value="ZFIN"/>
</dbReference>
<dbReference type="GO" id="GO:0048936">
    <property type="term" value="P:peripheral nervous system neuron axonogenesis"/>
    <property type="evidence" value="ECO:0000315"/>
    <property type="project" value="ZFIN"/>
</dbReference>
<dbReference type="GO" id="GO:1903862">
    <property type="term" value="P:positive regulation of oxidative phosphorylation"/>
    <property type="evidence" value="ECO:0000315"/>
    <property type="project" value="ZFIN"/>
</dbReference>
<dbReference type="GO" id="GO:0051259">
    <property type="term" value="P:protein complex oligomerization"/>
    <property type="evidence" value="ECO:0000315"/>
    <property type="project" value="ZFIN"/>
</dbReference>
<dbReference type="GO" id="GO:0048841">
    <property type="term" value="P:regulation of axon extension involved in axon guidance"/>
    <property type="evidence" value="ECO:0000315"/>
    <property type="project" value="ZFIN"/>
</dbReference>
<dbReference type="GO" id="GO:1904396">
    <property type="term" value="P:regulation of neuromuscular junction development"/>
    <property type="evidence" value="ECO:0000315"/>
    <property type="project" value="ZFIN"/>
</dbReference>
<dbReference type="GO" id="GO:0000387">
    <property type="term" value="P:spliceosomal snRNP assembly"/>
    <property type="evidence" value="ECO:0000318"/>
    <property type="project" value="GO_Central"/>
</dbReference>
<dbReference type="GO" id="GO:0051124">
    <property type="term" value="P:synaptic assembly at neuromuscular junction"/>
    <property type="evidence" value="ECO:0000315"/>
    <property type="project" value="ZFIN"/>
</dbReference>
<dbReference type="GO" id="GO:0042246">
    <property type="term" value="P:tissue regeneration"/>
    <property type="evidence" value="ECO:0000315"/>
    <property type="project" value="ZFIN"/>
</dbReference>
<dbReference type="CDD" id="cd22852">
    <property type="entry name" value="SMN_C"/>
    <property type="match status" value="1"/>
</dbReference>
<dbReference type="CDD" id="cd22851">
    <property type="entry name" value="SMN_N"/>
    <property type="match status" value="1"/>
</dbReference>
<dbReference type="CDD" id="cd20398">
    <property type="entry name" value="Tudor_SMN"/>
    <property type="match status" value="1"/>
</dbReference>
<dbReference type="FunFam" id="2.30.30.140:FF:000038">
    <property type="entry name" value="Survival of motor neuron-related-splicing factor 30"/>
    <property type="match status" value="1"/>
</dbReference>
<dbReference type="Gene3D" id="2.30.30.140">
    <property type="match status" value="1"/>
</dbReference>
<dbReference type="Gene3D" id="3.40.190.10">
    <property type="entry name" value="Periplasmic binding protein-like II"/>
    <property type="match status" value="1"/>
</dbReference>
<dbReference type="InterPro" id="IPR040424">
    <property type="entry name" value="Smn1"/>
</dbReference>
<dbReference type="InterPro" id="IPR047313">
    <property type="entry name" value="SMN_C"/>
</dbReference>
<dbReference type="InterPro" id="IPR049481">
    <property type="entry name" value="SMN_G2-BD"/>
</dbReference>
<dbReference type="InterPro" id="IPR010304">
    <property type="entry name" value="SMN_Tudor"/>
</dbReference>
<dbReference type="InterPro" id="IPR002999">
    <property type="entry name" value="Tudor"/>
</dbReference>
<dbReference type="InterPro" id="IPR047298">
    <property type="entry name" value="Tudor_SMN_eumet"/>
</dbReference>
<dbReference type="PANTHER" id="PTHR39267:SF1">
    <property type="entry name" value="SURVIVAL MOTOR NEURON PROTEIN"/>
    <property type="match status" value="1"/>
</dbReference>
<dbReference type="PANTHER" id="PTHR39267">
    <property type="entry name" value="SURVIVAL MOTOR NEURON-LIKE PROTEIN 1"/>
    <property type="match status" value="1"/>
</dbReference>
<dbReference type="Pfam" id="PF20636">
    <property type="entry name" value="SMN_G2-BD"/>
    <property type="match status" value="1"/>
</dbReference>
<dbReference type="Pfam" id="PF06003">
    <property type="entry name" value="SMN_Tudor"/>
    <property type="match status" value="1"/>
</dbReference>
<dbReference type="Pfam" id="PF20635">
    <property type="entry name" value="SMN_YG-box"/>
    <property type="match status" value="1"/>
</dbReference>
<dbReference type="SMART" id="SM00333">
    <property type="entry name" value="TUDOR"/>
    <property type="match status" value="1"/>
</dbReference>
<dbReference type="SUPFAM" id="SSF63748">
    <property type="entry name" value="Tudor/PWWP/MBT"/>
    <property type="match status" value="1"/>
</dbReference>
<dbReference type="PROSITE" id="PS50304">
    <property type="entry name" value="TUDOR"/>
    <property type="match status" value="1"/>
</dbReference>
<accession>Q9W6S8</accession>
<feature type="chain" id="PRO_0000218906" description="Survival motor neuron protein 1">
    <location>
        <begin position="1"/>
        <end position="281"/>
    </location>
</feature>
<feature type="domain" description="Tudor" evidence="4">
    <location>
        <begin position="80"/>
        <end position="140"/>
    </location>
</feature>
<feature type="region of interest" description="Disordered" evidence="5">
    <location>
        <begin position="1"/>
        <end position="20"/>
    </location>
</feature>
<feature type="region of interest" description="Disordered" evidence="5">
    <location>
        <begin position="42"/>
        <end position="77"/>
    </location>
</feature>
<feature type="region of interest" description="Disordered" evidence="5">
    <location>
        <begin position="145"/>
        <end position="242"/>
    </location>
</feature>
<feature type="region of interest" description="P2 (binding site for SNRPB)" evidence="1">
    <location>
        <begin position="225"/>
        <end position="252"/>
    </location>
</feature>
<feature type="region of interest" description="Required for interaction with SYNCRIP" evidence="1">
    <location>
        <begin position="264"/>
        <end position="279"/>
    </location>
</feature>
<feature type="compositionally biased region" description="Basic residues" evidence="5">
    <location>
        <begin position="59"/>
        <end position="73"/>
    </location>
</feature>
<feature type="compositionally biased region" description="Basic and acidic residues" evidence="5">
    <location>
        <begin position="145"/>
        <end position="159"/>
    </location>
</feature>
<feature type="compositionally biased region" description="Pro residues" evidence="5">
    <location>
        <begin position="179"/>
        <end position="197"/>
    </location>
</feature>
<feature type="compositionally biased region" description="Pro residues" evidence="5">
    <location>
        <begin position="212"/>
        <end position="235"/>
    </location>
</feature>
<feature type="modified residue" description="Phosphothreonine" evidence="6">
    <location>
        <position position="14"/>
    </location>
</feature>
<feature type="modified residue" description="Phosphoserine" evidence="6">
    <location>
        <position position="17"/>
    </location>
</feature>
<feature type="modified residue" description="Phosphoserine" evidence="6">
    <location>
        <position position="20"/>
    </location>
</feature>
<gene>
    <name type="primary">smn1</name>
    <name type="synonym">smn</name>
</gene>
<organism>
    <name type="scientific">Danio rerio</name>
    <name type="common">Zebrafish</name>
    <name type="synonym">Brachydanio rerio</name>
    <dbReference type="NCBI Taxonomy" id="7955"/>
    <lineage>
        <taxon>Eukaryota</taxon>
        <taxon>Metazoa</taxon>
        <taxon>Chordata</taxon>
        <taxon>Craniata</taxon>
        <taxon>Vertebrata</taxon>
        <taxon>Euteleostomi</taxon>
        <taxon>Actinopterygii</taxon>
        <taxon>Neopterygii</taxon>
        <taxon>Teleostei</taxon>
        <taxon>Ostariophysi</taxon>
        <taxon>Cypriniformes</taxon>
        <taxon>Danionidae</taxon>
        <taxon>Danioninae</taxon>
        <taxon>Danio</taxon>
    </lineage>
</organism>
<sequence>MANGAEDVVFCRGTGQSDDSDIWDDTALIKAYDKAVASFKNALKGEDGATPQENDNPGKKRKNNKKNKSRKRCNAAPDKEWQVGDSCYAFWSEDGNLYTATITSVDQEKGTCVVFYTDYGNEEEQNLSDLLTEPPDMDEDALKTANVKETESSTEESDRSFTPQKSGHAKHKSKSNFPMGPPSWFPSFPPGPPPPPPHFKKMDGRRGEGPGPSFPGWPPMIPLGPPMIPPPPPMSPDFGEDDEALGSMLISWYMSGYHTGYYMGLRQGRKEAAASKKSHRK</sequence>
<evidence type="ECO:0000250" key="1"/>
<evidence type="ECO:0000250" key="2">
    <source>
        <dbReference type="UniProtKB" id="P97801"/>
    </source>
</evidence>
<evidence type="ECO:0000250" key="3">
    <source>
        <dbReference type="UniProtKB" id="Q16637"/>
    </source>
</evidence>
<evidence type="ECO:0000255" key="4">
    <source>
        <dbReference type="PROSITE-ProRule" id="PRU00211"/>
    </source>
</evidence>
<evidence type="ECO:0000256" key="5">
    <source>
        <dbReference type="SAM" id="MobiDB-lite"/>
    </source>
</evidence>
<evidence type="ECO:0000269" key="6">
    <source>
    </source>
</evidence>
<evidence type="ECO:0000269" key="7">
    <source>
    </source>
</evidence>
<evidence type="ECO:0000269" key="8">
    <source>
    </source>
</evidence>
<evidence type="ECO:0000305" key="9"/>
<reference key="1">
    <citation type="journal article" date="1999" name="Hum. Mol. Genet.">
        <title>The RNA-binding properties of SMN: deletion analysis of the zebrafish orthologue defines domains conserved in evolution.</title>
        <authorList>
            <person name="Bertrandy S."/>
            <person name="Burlet P."/>
            <person name="Clermont O."/>
            <person name="Huber C."/>
            <person name="Fondrat C."/>
            <person name="Thierry-Mieg D."/>
            <person name="Munnich A."/>
            <person name="Lefebvre S."/>
        </authorList>
    </citation>
    <scope>NUCLEOTIDE SEQUENCE [MRNA]</scope>
</reference>
<reference key="2">
    <citation type="journal article" date="2008" name="J. Proteome Res.">
        <title>Online automated in vivo zebrafish phosphoproteomics: from large-scale analysis down to a single embryo.</title>
        <authorList>
            <person name="Lemeer S."/>
            <person name="Pinkse M.W.H."/>
            <person name="Mohammed S."/>
            <person name="van Breukelen B."/>
            <person name="den Hertog J."/>
            <person name="Slijper M."/>
            <person name="Heck A.J.R."/>
        </authorList>
    </citation>
    <scope>PHOSPHORYLATION [LARGE SCALE ANALYSIS] AT THR-14; SER-17 AND SER-20</scope>
    <scope>IDENTIFICATION BY MASS SPECTROMETRY</scope>
    <source>
        <tissue>Embryo</tissue>
    </source>
</reference>
<reference key="3">
    <citation type="journal article" date="2012" name="Cell">
        <title>An SMN-dependent U12 splicing event essential for motor circuit function.</title>
        <authorList>
            <person name="Lotti F."/>
            <person name="Imlach W.L."/>
            <person name="Saieva L."/>
            <person name="Beck E.S."/>
            <person name="Hao le T."/>
            <person name="Li D.K."/>
            <person name="Jiao W."/>
            <person name="Mentis G.Z."/>
            <person name="Beattie C.E."/>
            <person name="McCabe B.D."/>
            <person name="Pellizzoni L."/>
        </authorList>
    </citation>
    <scope>FUNCTION</scope>
    <scope>DISRUPTION PHENOTYPE</scope>
</reference>
<reference key="4">
    <citation type="journal article" date="2017" name="J. Neurosci.">
        <title>HuD and the Survival Motor Neuron Protein Interact in Motoneurons and Are Essential for Motoneuron Development, Function, and mRNA Regulation.</title>
        <authorList>
            <person name="Hao le T."/>
            <person name="Duy P.Q."/>
            <person name="An M."/>
            <person name="Talbot J."/>
            <person name="Iyer C.C."/>
            <person name="Wolman M."/>
            <person name="Beattie C.E."/>
        </authorList>
    </citation>
    <scope>FUNCTION</scope>
    <scope>INTERACTION WITH ELAVL4</scope>
    <scope>DISRUPTION PHENOTYPE</scope>
</reference>
<proteinExistence type="evidence at protein level"/>
<keyword id="KW-0966">Cell projection</keyword>
<keyword id="KW-0963">Cytoplasm</keyword>
<keyword id="KW-0507">mRNA processing</keyword>
<keyword id="KW-0508">mRNA splicing</keyword>
<keyword id="KW-0524">Neurogenesis</keyword>
<keyword id="KW-0539">Nucleus</keyword>
<keyword id="KW-0597">Phosphoprotein</keyword>
<keyword id="KW-1185">Reference proteome</keyword>
<keyword id="KW-0694">RNA-binding</keyword>
<keyword id="KW-0747">Spliceosome</keyword>
<name>SMN1_DANRE</name>